<organism>
    <name type="scientific">Illicium oligandrum</name>
    <name type="common">Star anise</name>
    <dbReference type="NCBI Taxonomy" id="145286"/>
    <lineage>
        <taxon>Eukaryota</taxon>
        <taxon>Viridiplantae</taxon>
        <taxon>Streptophyta</taxon>
        <taxon>Embryophyta</taxon>
        <taxon>Tracheophyta</taxon>
        <taxon>Spermatophyta</taxon>
        <taxon>Magnoliopsida</taxon>
        <taxon>Austrobaileyales</taxon>
        <taxon>Schisandraceae</taxon>
        <taxon>Illicium</taxon>
    </lineage>
</organism>
<dbReference type="EMBL" id="EF380354">
    <property type="protein sequence ID" value="ABQ52562.1"/>
    <property type="molecule type" value="Genomic_DNA"/>
</dbReference>
<dbReference type="RefSeq" id="YP_001294314.1">
    <property type="nucleotide sequence ID" value="NC_009600.1"/>
</dbReference>
<dbReference type="GeneID" id="5236741"/>
<dbReference type="GO" id="GO:0009570">
    <property type="term" value="C:chloroplast stroma"/>
    <property type="evidence" value="ECO:0007669"/>
    <property type="project" value="UniProtKB-SubCell"/>
</dbReference>
<dbReference type="GO" id="GO:0005524">
    <property type="term" value="F:ATP binding"/>
    <property type="evidence" value="ECO:0007669"/>
    <property type="project" value="UniProtKB-KW"/>
</dbReference>
<dbReference type="GO" id="GO:0016887">
    <property type="term" value="F:ATP hydrolysis activity"/>
    <property type="evidence" value="ECO:0007669"/>
    <property type="project" value="InterPro"/>
</dbReference>
<dbReference type="CDD" id="cd19505">
    <property type="entry name" value="RecA-like_Ycf2"/>
    <property type="match status" value="1"/>
</dbReference>
<dbReference type="Gene3D" id="3.40.50.300">
    <property type="entry name" value="P-loop containing nucleotide triphosphate hydrolases"/>
    <property type="match status" value="1"/>
</dbReference>
<dbReference type="HAMAP" id="MF_01330">
    <property type="entry name" value="Ycf2"/>
    <property type="match status" value="1"/>
</dbReference>
<dbReference type="InterPro" id="IPR003959">
    <property type="entry name" value="ATPase_AAA_core"/>
</dbReference>
<dbReference type="InterPro" id="IPR027417">
    <property type="entry name" value="P-loop_NTPase"/>
</dbReference>
<dbReference type="InterPro" id="IPR008543">
    <property type="entry name" value="Uncharacterised_Ycf2"/>
</dbReference>
<dbReference type="InterPro" id="IPR056777">
    <property type="entry name" value="Ycf2_N"/>
</dbReference>
<dbReference type="PANTHER" id="PTHR33078:SF51">
    <property type="entry name" value="PROTEIN TIC 214"/>
    <property type="match status" value="1"/>
</dbReference>
<dbReference type="PANTHER" id="PTHR33078">
    <property type="entry name" value="PROTEIN YCF2-RELATED"/>
    <property type="match status" value="1"/>
</dbReference>
<dbReference type="Pfam" id="PF00004">
    <property type="entry name" value="AAA"/>
    <property type="match status" value="1"/>
</dbReference>
<dbReference type="Pfam" id="PF05695">
    <property type="entry name" value="Ycf2"/>
    <property type="match status" value="1"/>
</dbReference>
<dbReference type="SUPFAM" id="SSF52540">
    <property type="entry name" value="P-loop containing nucleoside triphosphate hydrolases"/>
    <property type="match status" value="1"/>
</dbReference>
<evidence type="ECO:0000255" key="1">
    <source>
        <dbReference type="HAMAP-Rule" id="MF_01330"/>
    </source>
</evidence>
<gene>
    <name evidence="1" type="primary">ycf2</name>
</gene>
<protein>
    <recommendedName>
        <fullName evidence="1">Protein Ycf2</fullName>
    </recommendedName>
</protein>
<keyword id="KW-0067">ATP-binding</keyword>
<keyword id="KW-0150">Chloroplast</keyword>
<keyword id="KW-0547">Nucleotide-binding</keyword>
<keyword id="KW-0934">Plastid</keyword>
<feature type="chain" id="PRO_0000343773" description="Protein Ycf2">
    <location>
        <begin position="1"/>
        <end position="2271"/>
    </location>
</feature>
<feature type="binding site" evidence="1">
    <location>
        <begin position="1628"/>
        <end position="1635"/>
    </location>
    <ligand>
        <name>ATP</name>
        <dbReference type="ChEBI" id="CHEBI:30616"/>
    </ligand>
</feature>
<sequence length="2271" mass="267448">MKRNQLKSWIFELREIKNSHYFVDSWDKFDSVGSFTYIFFHQERFMKLFDPRILSILLSHDSQDLTRNRYFNFTIKGVVLLVMGVLIFIFIYRINNRNMVERKNLYLMGLLPIPMNSIGLRNDTLEESFLSSNINRLIVSLLYLPKEKKISESFFMDPKGRSWVLPITKKCIVPESNWDLRGWRNRIVKKRDSSCKISNKRVAGIEISFKDKDIKYLEFLFVSYTDDPIRKDRDWELFDRLSPRKKRNIINLNSGQRFEILVKHLICYLMPAFHEKGSIEVEGFFKQQGAQATIQSNDIEHLSHLFSRNKWGISLQNCAQFHMWQFHQDLFVSWGKNKHESHFFRNVSRENWIWLDNVWLVNNDRFFSKVRNVSSNIQYDSTRSIFVQVTDSSQLKGSSDQSRDPFDSISNESSKYHTLINQTEIQQLKERLILLDPSFRQMERTETEREKQMDNHLFPAEVKKCLGNPTRSIRSFFSDRWSELPLGSNPTERSTRDQKLLKKQQDVSFVPSRRSENKEMFDIFKIITYLQNTVSIHPISSDPDMVPKDEPDRDSSNKISFLNKNPFFDLFHLFHDRNKEGYTFHYDFESEERFPEMSDLFTLSITEPNLVYHKGFAFSIDSYGLDQKKFLNEVSWDESKKKSFLVLPHIFYEENESFYRRIRRKSGRISCRNGLEEKKKKIVVFASNNIMGAVNQYRLIRDLIQIQYSPHGYIRNRLNRFLLMNRSDHNFEYGIQRDQIGNDTLNHITIMKYTINQHLSNLIKNRKKWHDSHSLIFPTERSMNRDPDAYRYKWSNESNNFQEHFEHFVSEQKNHFQVVFNQFRINQYSIDWSEVIDKQDLSKSFRFFLSNSLLFFSKSLPLFFLSIGNIPIHSREIHIYEFKGPNHQLCNQLLESIGVQIVHLKKLKPFLLDDHDISQRSKLLINGGTISPLFFNKIQGWVIDSFHIRKNRRKYLYNMDSYFSMISHDRDNCMNPVKPFHRSSLISSFYKANRLPFLNNSHRFWFYCDKRFPFYVEVEKARINNYDLAYAQFLNISFIRNKIFSLCVGKKKKPFLEIDAISPIESQVSDIFIPNDFPQSGDERYNLYKSFYFPTRSDLFVRRAIYSIADIFETPLTEGQIVHFERTYCQPLSDINLSESEGNNLHQYLSFNSNMGLIRIPCSEKYLPSRKRKKRSLCLKKCVEKRQMYRTFQRNSAFSNLSKWNLFQTYMPWFFTSTGCKYINLIFLDTFADPLPILSSSQKFLSIFHDIMHGSDILWPTENLSLLEAWSKIPLSQKKWWTILPQSNLISEISSKCLQNLLLSEEMIHRNNESPASLIWTHLIAPNAREFLYSILFLLLVAGYLVRTHLLFVSQTSSELQTEFEKIKSLMIPSYMVEVRKLLDRYPPLELNFLWLKNLFLVALEQLEDFMEKIWGSASGGNILLGGGPTYGVKSIRSKKKDLNINLIDIISIISNPINLITFSRKTRDLSRTSKEIYSWIRQRKNVNSDWIDDKIESWVANNDWIDDEEREFLVQFSTLTTEKRIDQILLSLTHSDRLSKNDSGYQMIEQPGSIYLRYLVDIHQKYLMNYEFSRFCLAERRIFLAHYQTITYSQSSCIANSSHFRSHGKPVSLRLVLSPSRGILVIGSIGTGRSYLVKYLATNSYVPFITVFPNKLLDDKPKDYFSDDIDIDESDDLNYDLDTELLTMTNVLTMYMTLKMDQFDITLQFELAEEMSPCIIWIPNIHELYVNESNYLSLSLLVNYLSRDCERCSTRNILVIASTPIPQKVDPALIAPNKSNTCIKIRRLLIPQERKHFFILSSTRGFHLEKKMFHTNRFGSISMGSNARDLVALTSEALSISITQKKSIIDTNTIKSALHRQTWDLRSQVRPVQDHGILFYQIGRAVAQNALLSNCSINPISIYMKKKSCKKGDSYLYKWYFELGTSMKKLTILLYLLSCSAGSVAQDLWSTSGPDEKNGITSYGFVENDSDLVHGLLEGVLVGSSRTEKDCSQFDNAQAQVTLLLRSEPRNQLDMMQNGSCSIVDQRFLYEKYESEFEEGEREGALDPQQIEEDLFNHIVWAPRTRIRRPCGNLFDCIERTNELGFPYWARSFRGKRIIYHKEDELQENDSEFLQSGTMQYQTRDRSSKEQGFFRISQFIWDPADPFFFLFKDQPFVSVFSRREFFADEEMSKGLITSQTNPPTSIYKRWFIKNTQEKHFELLIHRQRWLRTNSSLSNGSFRSNTPSESYQYLSNLFLSNGTLLDQMTKALLRKRWLFPDEMKHLIHVTG</sequence>
<geneLocation type="chloroplast"/>
<reference key="1">
    <citation type="journal article" date="2007" name="Mol. Phylogenet. Evol.">
        <title>Phylogenetic and evolutionary implications of complete chloroplast genome sequences of four early-diverging angiosperms: Buxus (Buxaceae), Chloranthus (Chloranthaceae), Dioscorea (Dioscoreaceae), and Illicium (Schisandraceae).</title>
        <authorList>
            <person name="Hansen D.R."/>
            <person name="Dastidar S.G."/>
            <person name="Cai Z."/>
            <person name="Penaflor C."/>
            <person name="Kuehl J.V."/>
            <person name="Boore J.L."/>
            <person name="Jansen R.K."/>
        </authorList>
    </citation>
    <scope>NUCLEOTIDE SEQUENCE [LARGE SCALE GENOMIC DNA]</scope>
</reference>
<name>YCF2_ILLOL</name>
<accession>A6MMY8</accession>
<comment type="function">
    <text evidence="1">Probable ATPase of unknown function. Its presence in a non-photosynthetic plant (Epifagus virginiana) and experiments in tobacco indicate that it has an essential function which is probably not related to photosynthesis.</text>
</comment>
<comment type="subcellular location">
    <subcellularLocation>
        <location evidence="1">Plastid</location>
        <location evidence="1">Chloroplast stroma</location>
    </subcellularLocation>
</comment>
<comment type="similarity">
    <text evidence="1">Belongs to the Ycf2 family.</text>
</comment>
<proteinExistence type="inferred from homology"/>